<proteinExistence type="inferred from homology"/>
<reference key="1">
    <citation type="journal article" date="1995" name="J. Bacteriol.">
        <title>Molecular characterization of the genes encoding the tungsten-containing aldehyde ferredoxin oxidoreductase from Pyrococcus furiosus and formaldehyde ferredoxin oxidoreductase from Thermococcus litoralis.</title>
        <authorList>
            <person name="Kletzin A."/>
            <person name="Mukund S."/>
            <person name="Kelley-Crouse T.L."/>
            <person name="Chan M.K.S."/>
            <person name="Rees D.C."/>
            <person name="Adams M.W.W."/>
        </authorList>
    </citation>
    <scope>NUCLEOTIDE SEQUENCE [GENOMIC DNA]</scope>
    <source>
        <strain>ATCC 43587 / DSM 3638 / JCM 8422 / Vc1</strain>
    </source>
</reference>
<reference key="2">
    <citation type="journal article" date="1999" name="Genetics">
        <title>Divergence of the hyperthermophilic archaea Pyrococcus furiosus and P. horikoshii inferred from complete genomic sequences.</title>
        <authorList>
            <person name="Maeder D.L."/>
            <person name="Weiss R.B."/>
            <person name="Dunn D.M."/>
            <person name="Cherry J.L."/>
            <person name="Gonzalez J.M."/>
            <person name="DiRuggiero J."/>
            <person name="Robb F.T."/>
        </authorList>
    </citation>
    <scope>NUCLEOTIDE SEQUENCE [LARGE SCALE GENOMIC DNA]</scope>
    <source>
        <strain>ATCC 43587 / DSM 3638 / JCM 8422 / Vc1</strain>
    </source>
</reference>
<protein>
    <recommendedName>
        <fullName>Tungsten-containing aldehyde ferredoxin oxidoreductase cofactor-modifying protein</fullName>
    </recommendedName>
</protein>
<dbReference type="EMBL" id="X79777">
    <property type="protein sequence ID" value="CAA56172.1"/>
    <property type="molecule type" value="Genomic_DNA"/>
</dbReference>
<dbReference type="EMBL" id="AE009950">
    <property type="protein sequence ID" value="AAL80468.1"/>
    <property type="status" value="ALT_INIT"/>
    <property type="molecule type" value="Genomic_DNA"/>
</dbReference>
<dbReference type="SMR" id="Q51741"/>
<dbReference type="STRING" id="186497.PF0344"/>
<dbReference type="PaxDb" id="186497-PF0344"/>
<dbReference type="KEGG" id="pfu:PF0344"/>
<dbReference type="PATRIC" id="fig|186497.12.peg.358"/>
<dbReference type="eggNOG" id="arCOG00938">
    <property type="taxonomic scope" value="Archaea"/>
</dbReference>
<dbReference type="HOGENOM" id="CLU_009273_1_1_2"/>
<dbReference type="PhylomeDB" id="Q51741"/>
<dbReference type="Proteomes" id="UP000001013">
    <property type="component" value="Chromosome"/>
</dbReference>
<dbReference type="GO" id="GO:0051539">
    <property type="term" value="F:4 iron, 4 sulfur cluster binding"/>
    <property type="evidence" value="ECO:0007669"/>
    <property type="project" value="UniProtKB-KW"/>
</dbReference>
<dbReference type="GO" id="GO:0003824">
    <property type="term" value="F:catalytic activity"/>
    <property type="evidence" value="ECO:0007669"/>
    <property type="project" value="InterPro"/>
</dbReference>
<dbReference type="GO" id="GO:0046872">
    <property type="term" value="F:metal ion binding"/>
    <property type="evidence" value="ECO:0007669"/>
    <property type="project" value="UniProtKB-KW"/>
</dbReference>
<dbReference type="CDD" id="cd01335">
    <property type="entry name" value="Radical_SAM"/>
    <property type="match status" value="1"/>
</dbReference>
<dbReference type="CDD" id="cd21121">
    <property type="entry name" value="SPASM_Cmo-like"/>
    <property type="match status" value="1"/>
</dbReference>
<dbReference type="Gene3D" id="3.20.20.70">
    <property type="entry name" value="Aldolase class I"/>
    <property type="match status" value="1"/>
</dbReference>
<dbReference type="InterPro" id="IPR023885">
    <property type="entry name" value="4Fe4S-binding_SPASM_dom"/>
</dbReference>
<dbReference type="InterPro" id="IPR013785">
    <property type="entry name" value="Aldolase_TIM"/>
</dbReference>
<dbReference type="InterPro" id="IPR034391">
    <property type="entry name" value="Cmo-like_SPASM_containing"/>
</dbReference>
<dbReference type="InterPro" id="IPR006638">
    <property type="entry name" value="Elp3/MiaA/NifB-like_rSAM"/>
</dbReference>
<dbReference type="InterPro" id="IPR000385">
    <property type="entry name" value="MoaA_NifB_PqqE_Fe-S-bd_CS"/>
</dbReference>
<dbReference type="InterPro" id="IPR017200">
    <property type="entry name" value="PqqE-like"/>
</dbReference>
<dbReference type="InterPro" id="IPR050377">
    <property type="entry name" value="Radical_SAM_PqqE_MftC-like"/>
</dbReference>
<dbReference type="InterPro" id="IPR007197">
    <property type="entry name" value="rSAM"/>
</dbReference>
<dbReference type="InterPro" id="IPR027604">
    <property type="entry name" value="W_rSAM_matur"/>
</dbReference>
<dbReference type="NCBIfam" id="TIGR04317">
    <property type="entry name" value="W_rSAM_matur"/>
    <property type="match status" value="1"/>
</dbReference>
<dbReference type="PANTHER" id="PTHR11228">
    <property type="entry name" value="RADICAL SAM DOMAIN PROTEIN"/>
    <property type="match status" value="1"/>
</dbReference>
<dbReference type="PANTHER" id="PTHR11228:SF34">
    <property type="entry name" value="TUNGSTEN-CONTAINING ALDEHYDE FERREDOXIN OXIDOREDUCTASE COFACTOR MODIFYING PROTEIN"/>
    <property type="match status" value="1"/>
</dbReference>
<dbReference type="Pfam" id="PF04055">
    <property type="entry name" value="Radical_SAM"/>
    <property type="match status" value="1"/>
</dbReference>
<dbReference type="Pfam" id="PF13186">
    <property type="entry name" value="SPASM"/>
    <property type="match status" value="1"/>
</dbReference>
<dbReference type="PIRSF" id="PIRSF037420">
    <property type="entry name" value="PQQ_syn_pqqE"/>
    <property type="match status" value="1"/>
</dbReference>
<dbReference type="SFLD" id="SFLDG01387">
    <property type="entry name" value="BtrN-like_SPASM_domain_contain"/>
    <property type="match status" value="1"/>
</dbReference>
<dbReference type="SFLD" id="SFLDG01386">
    <property type="entry name" value="main_SPASM_domain-containing"/>
    <property type="match status" value="1"/>
</dbReference>
<dbReference type="SFLD" id="SFLDF00570">
    <property type="entry name" value="tungsten_cofactor_oxidoreducas"/>
    <property type="match status" value="1"/>
</dbReference>
<dbReference type="SMART" id="SM00729">
    <property type="entry name" value="Elp3"/>
    <property type="match status" value="1"/>
</dbReference>
<dbReference type="SUPFAM" id="SSF102114">
    <property type="entry name" value="Radical SAM enzymes"/>
    <property type="match status" value="1"/>
</dbReference>
<dbReference type="PROSITE" id="PS01305">
    <property type="entry name" value="MOAA_NIFB_PQQE"/>
    <property type="match status" value="1"/>
</dbReference>
<dbReference type="PROSITE" id="PS51918">
    <property type="entry name" value="RADICAL_SAM"/>
    <property type="match status" value="1"/>
</dbReference>
<accession>Q51741</accession>
<comment type="function">
    <text>Involved in the biosynthesis of a molybdopterin-based tungsten cofactor.</text>
</comment>
<comment type="cofactor">
    <cofactor evidence="1">
        <name>[4Fe-4S] cluster</name>
        <dbReference type="ChEBI" id="CHEBI:49883"/>
    </cofactor>
    <text evidence="1">Binds 1 [4Fe-4S] cluster. The cluster is coordinated with 3 cysteines and an exchangeable S-adenosyl-L-methionine.</text>
</comment>
<comment type="similarity">
    <text evidence="3">Belongs to the radical SAM superfamily.</text>
</comment>
<comment type="sequence caution" evidence="3">
    <conflict type="erroneous initiation">
        <sequence resource="EMBL-CDS" id="AAL80468"/>
    </conflict>
</comment>
<sequence>MKYLYLEITSRCNLRCEMCFKQHWEDEEGDMDYDLFLKILDDAEKFPELKMIYFGGIGEPTVHPRFMDMVREVKKRGFALGISTNGTLLTDEMLKELAELGVDLVYFSMDVLPTAQNVVTLGHILAGVTAEKIKKLVKYREEVGTHKPSIGVEVVVTKENYKQLPELARYLLNLGVDAMLVSNLLPLTPEQVNDIVYDGSIDMTPIVNELYKIAHNGLYIKLPYFELKTERVCDFDENKVAVIRWDGEVVPCYRFLHTYREYIFGREKKVNTYSFGNVREKSLADIWTSERYTWFRFITKNYLYPSCTDCSLRDACDFVKTTDIDCWGNEPSCADCLWSRRIVMCPIPQYNFGKFL</sequence>
<organism>
    <name type="scientific">Pyrococcus furiosus (strain ATCC 43587 / DSM 3638 / JCM 8422 / Vc1)</name>
    <dbReference type="NCBI Taxonomy" id="186497"/>
    <lineage>
        <taxon>Archaea</taxon>
        <taxon>Methanobacteriati</taxon>
        <taxon>Methanobacteriota</taxon>
        <taxon>Thermococci</taxon>
        <taxon>Thermococcales</taxon>
        <taxon>Thermococcaceae</taxon>
        <taxon>Pyrococcus</taxon>
    </lineage>
</organism>
<name>CMO_PYRFU</name>
<feature type="chain" id="PRO_0000153048" description="Tungsten-containing aldehyde ferredoxin oxidoreductase cofactor-modifying protein">
    <location>
        <begin position="1"/>
        <end position="356"/>
    </location>
</feature>
<feature type="domain" description="Radical SAM core" evidence="2">
    <location>
        <begin position="1"/>
        <end position="214"/>
    </location>
</feature>
<feature type="binding site" evidence="1">
    <location>
        <position position="12"/>
    </location>
    <ligand>
        <name>[4Fe-4S] cluster</name>
        <dbReference type="ChEBI" id="CHEBI:49883"/>
        <note>4Fe-4S-S-AdoMet</note>
    </ligand>
</feature>
<feature type="binding site" evidence="1">
    <location>
        <position position="16"/>
    </location>
    <ligand>
        <name>[4Fe-4S] cluster</name>
        <dbReference type="ChEBI" id="CHEBI:49883"/>
        <note>4Fe-4S-S-AdoMet</note>
    </ligand>
</feature>
<feature type="binding site" evidence="1">
    <location>
        <position position="19"/>
    </location>
    <ligand>
        <name>[4Fe-4S] cluster</name>
        <dbReference type="ChEBI" id="CHEBI:49883"/>
        <note>4Fe-4S-S-AdoMet</note>
    </ligand>
</feature>
<feature type="sequence conflict" description="In Ref. 1; CAA56172." evidence="3" ref="1">
    <original>DDAEKFPELKMIYFGG</original>
    <variation>RRCREVSRAKDDILRRS</variation>
    <location>
        <begin position="41"/>
        <end position="56"/>
    </location>
</feature>
<evidence type="ECO:0000250" key="1"/>
<evidence type="ECO:0000255" key="2">
    <source>
        <dbReference type="PROSITE-ProRule" id="PRU01266"/>
    </source>
</evidence>
<evidence type="ECO:0000305" key="3"/>
<gene>
    <name type="primary">cmo</name>
    <name type="ordered locus">PF0344</name>
</gene>
<keyword id="KW-0004">4Fe-4S</keyword>
<keyword id="KW-0408">Iron</keyword>
<keyword id="KW-0411">Iron-sulfur</keyword>
<keyword id="KW-0479">Metal-binding</keyword>
<keyword id="KW-1185">Reference proteome</keyword>
<keyword id="KW-0949">S-adenosyl-L-methionine</keyword>
<keyword id="KW-0826">Tungsten</keyword>